<dbReference type="EC" id="3.6.5.-" evidence="1"/>
<dbReference type="EMBL" id="AP008229">
    <property type="protein sequence ID" value="BAE68263.1"/>
    <property type="molecule type" value="Genomic_DNA"/>
</dbReference>
<dbReference type="SMR" id="Q2P5B4"/>
<dbReference type="KEGG" id="xom:XOO1508"/>
<dbReference type="HOGENOM" id="CLU_011747_2_0_6"/>
<dbReference type="GO" id="GO:0005737">
    <property type="term" value="C:cytoplasm"/>
    <property type="evidence" value="ECO:0007669"/>
    <property type="project" value="UniProtKB-SubCell"/>
</dbReference>
<dbReference type="GO" id="GO:0005525">
    <property type="term" value="F:GTP binding"/>
    <property type="evidence" value="ECO:0007669"/>
    <property type="project" value="UniProtKB-UniRule"/>
</dbReference>
<dbReference type="GO" id="GO:0003924">
    <property type="term" value="F:GTPase activity"/>
    <property type="evidence" value="ECO:0007669"/>
    <property type="project" value="UniProtKB-UniRule"/>
</dbReference>
<dbReference type="GO" id="GO:0000287">
    <property type="term" value="F:magnesium ion binding"/>
    <property type="evidence" value="ECO:0007669"/>
    <property type="project" value="InterPro"/>
</dbReference>
<dbReference type="GO" id="GO:0042254">
    <property type="term" value="P:ribosome biogenesis"/>
    <property type="evidence" value="ECO:0007669"/>
    <property type="project" value="UniProtKB-UniRule"/>
</dbReference>
<dbReference type="CDD" id="cd01898">
    <property type="entry name" value="Obg"/>
    <property type="match status" value="1"/>
</dbReference>
<dbReference type="FunFam" id="2.70.210.12:FF:000001">
    <property type="entry name" value="GTPase Obg"/>
    <property type="match status" value="1"/>
</dbReference>
<dbReference type="Gene3D" id="2.70.210.12">
    <property type="entry name" value="GTP1/OBG domain"/>
    <property type="match status" value="1"/>
</dbReference>
<dbReference type="Gene3D" id="3.40.50.300">
    <property type="entry name" value="P-loop containing nucleotide triphosphate hydrolases"/>
    <property type="match status" value="1"/>
</dbReference>
<dbReference type="HAMAP" id="MF_01454">
    <property type="entry name" value="GTPase_Obg"/>
    <property type="match status" value="1"/>
</dbReference>
<dbReference type="InterPro" id="IPR031167">
    <property type="entry name" value="G_OBG"/>
</dbReference>
<dbReference type="InterPro" id="IPR006073">
    <property type="entry name" value="GTP-bd"/>
</dbReference>
<dbReference type="InterPro" id="IPR014100">
    <property type="entry name" value="GTP-bd_Obg/CgtA"/>
</dbReference>
<dbReference type="InterPro" id="IPR006074">
    <property type="entry name" value="GTP1-OBG_CS"/>
</dbReference>
<dbReference type="InterPro" id="IPR006169">
    <property type="entry name" value="GTP1_OBG_dom"/>
</dbReference>
<dbReference type="InterPro" id="IPR036726">
    <property type="entry name" value="GTP1_OBG_dom_sf"/>
</dbReference>
<dbReference type="InterPro" id="IPR045086">
    <property type="entry name" value="OBG_GTPase"/>
</dbReference>
<dbReference type="InterPro" id="IPR027417">
    <property type="entry name" value="P-loop_NTPase"/>
</dbReference>
<dbReference type="NCBIfam" id="TIGR02729">
    <property type="entry name" value="Obg_CgtA"/>
    <property type="match status" value="1"/>
</dbReference>
<dbReference type="NCBIfam" id="NF008955">
    <property type="entry name" value="PRK12297.1"/>
    <property type="match status" value="1"/>
</dbReference>
<dbReference type="NCBIfam" id="NF008956">
    <property type="entry name" value="PRK12299.1"/>
    <property type="match status" value="1"/>
</dbReference>
<dbReference type="PANTHER" id="PTHR11702">
    <property type="entry name" value="DEVELOPMENTALLY REGULATED GTP-BINDING PROTEIN-RELATED"/>
    <property type="match status" value="1"/>
</dbReference>
<dbReference type="PANTHER" id="PTHR11702:SF31">
    <property type="entry name" value="MITOCHONDRIAL RIBOSOME-ASSOCIATED GTPASE 2"/>
    <property type="match status" value="1"/>
</dbReference>
<dbReference type="Pfam" id="PF01018">
    <property type="entry name" value="GTP1_OBG"/>
    <property type="match status" value="1"/>
</dbReference>
<dbReference type="Pfam" id="PF01926">
    <property type="entry name" value="MMR_HSR1"/>
    <property type="match status" value="1"/>
</dbReference>
<dbReference type="PIRSF" id="PIRSF002401">
    <property type="entry name" value="GTP_bd_Obg/CgtA"/>
    <property type="match status" value="1"/>
</dbReference>
<dbReference type="PRINTS" id="PR00326">
    <property type="entry name" value="GTP1OBG"/>
</dbReference>
<dbReference type="SUPFAM" id="SSF82051">
    <property type="entry name" value="Obg GTP-binding protein N-terminal domain"/>
    <property type="match status" value="1"/>
</dbReference>
<dbReference type="SUPFAM" id="SSF52540">
    <property type="entry name" value="P-loop containing nucleoside triphosphate hydrolases"/>
    <property type="match status" value="1"/>
</dbReference>
<dbReference type="PROSITE" id="PS51710">
    <property type="entry name" value="G_OBG"/>
    <property type="match status" value="1"/>
</dbReference>
<dbReference type="PROSITE" id="PS00905">
    <property type="entry name" value="GTP1_OBG"/>
    <property type="match status" value="1"/>
</dbReference>
<dbReference type="PROSITE" id="PS51883">
    <property type="entry name" value="OBG"/>
    <property type="match status" value="1"/>
</dbReference>
<protein>
    <recommendedName>
        <fullName evidence="1">GTPase Obg</fullName>
        <ecNumber evidence="1">3.6.5.-</ecNumber>
    </recommendedName>
    <alternativeName>
        <fullName evidence="1">GTP-binding protein Obg</fullName>
    </alternativeName>
</protein>
<accession>Q2P5B4</accession>
<proteinExistence type="inferred from homology"/>
<comment type="function">
    <text evidence="1">An essential GTPase which binds GTP, GDP and possibly (p)ppGpp with moderate affinity, with high nucleotide exchange rates and a fairly low GTP hydrolysis rate. Plays a role in control of the cell cycle, stress response, ribosome biogenesis and in those bacteria that undergo differentiation, in morphogenesis control.</text>
</comment>
<comment type="cofactor">
    <cofactor evidence="1">
        <name>Mg(2+)</name>
        <dbReference type="ChEBI" id="CHEBI:18420"/>
    </cofactor>
</comment>
<comment type="subunit">
    <text evidence="1">Monomer.</text>
</comment>
<comment type="subcellular location">
    <subcellularLocation>
        <location evidence="1">Cytoplasm</location>
    </subcellularLocation>
</comment>
<comment type="similarity">
    <text evidence="1">Belongs to the TRAFAC class OBG-HflX-like GTPase superfamily. OBG GTPase family.</text>
</comment>
<name>OBG_XANOM</name>
<feature type="chain" id="PRO_0000386399" description="GTPase Obg">
    <location>
        <begin position="1"/>
        <end position="350"/>
    </location>
</feature>
<feature type="domain" description="Obg" evidence="2">
    <location>
        <begin position="1"/>
        <end position="159"/>
    </location>
</feature>
<feature type="domain" description="OBG-type G" evidence="1">
    <location>
        <begin position="160"/>
        <end position="337"/>
    </location>
</feature>
<feature type="region of interest" description="Disordered" evidence="3">
    <location>
        <begin position="127"/>
        <end position="146"/>
    </location>
</feature>
<feature type="compositionally biased region" description="Polar residues" evidence="3">
    <location>
        <begin position="130"/>
        <end position="143"/>
    </location>
</feature>
<feature type="binding site" evidence="1">
    <location>
        <begin position="166"/>
        <end position="173"/>
    </location>
    <ligand>
        <name>GTP</name>
        <dbReference type="ChEBI" id="CHEBI:37565"/>
    </ligand>
</feature>
<feature type="binding site" evidence="1">
    <location>
        <position position="173"/>
    </location>
    <ligand>
        <name>Mg(2+)</name>
        <dbReference type="ChEBI" id="CHEBI:18420"/>
    </ligand>
</feature>
<feature type="binding site" evidence="1">
    <location>
        <begin position="191"/>
        <end position="195"/>
    </location>
    <ligand>
        <name>GTP</name>
        <dbReference type="ChEBI" id="CHEBI:37565"/>
    </ligand>
</feature>
<feature type="binding site" evidence="1">
    <location>
        <position position="193"/>
    </location>
    <ligand>
        <name>Mg(2+)</name>
        <dbReference type="ChEBI" id="CHEBI:18420"/>
    </ligand>
</feature>
<feature type="binding site" evidence="1">
    <location>
        <begin position="213"/>
        <end position="216"/>
    </location>
    <ligand>
        <name>GTP</name>
        <dbReference type="ChEBI" id="CHEBI:37565"/>
    </ligand>
</feature>
<feature type="binding site" evidence="1">
    <location>
        <begin position="287"/>
        <end position="290"/>
    </location>
    <ligand>
        <name>GTP</name>
        <dbReference type="ChEBI" id="CHEBI:37565"/>
    </ligand>
</feature>
<feature type="binding site" evidence="1">
    <location>
        <begin position="318"/>
        <end position="320"/>
    </location>
    <ligand>
        <name>GTP</name>
        <dbReference type="ChEBI" id="CHEBI:37565"/>
    </ligand>
</feature>
<gene>
    <name evidence="1" type="primary">obg</name>
    <name type="ordered locus">XOO1508</name>
</gene>
<keyword id="KW-0963">Cytoplasm</keyword>
<keyword id="KW-0342">GTP-binding</keyword>
<keyword id="KW-0378">Hydrolase</keyword>
<keyword id="KW-0460">Magnesium</keyword>
<keyword id="KW-0479">Metal-binding</keyword>
<keyword id="KW-0547">Nucleotide-binding</keyword>
<evidence type="ECO:0000255" key="1">
    <source>
        <dbReference type="HAMAP-Rule" id="MF_01454"/>
    </source>
</evidence>
<evidence type="ECO:0000255" key="2">
    <source>
        <dbReference type="PROSITE-ProRule" id="PRU01231"/>
    </source>
</evidence>
<evidence type="ECO:0000256" key="3">
    <source>
        <dbReference type="SAM" id="MobiDB-lite"/>
    </source>
</evidence>
<organism>
    <name type="scientific">Xanthomonas oryzae pv. oryzae (strain MAFF 311018)</name>
    <dbReference type="NCBI Taxonomy" id="342109"/>
    <lineage>
        <taxon>Bacteria</taxon>
        <taxon>Pseudomonadati</taxon>
        <taxon>Pseudomonadota</taxon>
        <taxon>Gammaproteobacteria</taxon>
        <taxon>Lysobacterales</taxon>
        <taxon>Lysobacteraceae</taxon>
        <taxon>Xanthomonas</taxon>
    </lineage>
</organism>
<reference key="1">
    <citation type="journal article" date="2005" name="Jpn. Agric. Res. Q.">
        <title>Genome sequence of Xanthomonas oryzae pv. oryzae suggests contribution of large numbers of effector genes and insertion sequences to its race diversity.</title>
        <authorList>
            <person name="Ochiai H."/>
            <person name="Inoue Y."/>
            <person name="Takeya M."/>
            <person name="Sasaki A."/>
            <person name="Kaku H."/>
        </authorList>
    </citation>
    <scope>NUCLEOTIDE SEQUENCE [LARGE SCALE GENOMIC DNA]</scope>
    <source>
        <strain>MAFF 311018</strain>
    </source>
</reference>
<sequence>MKLVDEAEILVTAGHGGNGCVGFRREKFIPLGGPDGGDGGSGGSVWIVADENVNTLVDFRHERTFKAQRGENGMGRQAYGKGGEDRIIVVPVGTVVINVQTDEVIGDLTRHGDRLLVAKGGKGGLGNMHFKSSVNRAPRQSTTGEEGEERLLKLELRLLADVGLLGFPNAGKSTLIRAVSSATPKVADYPFTTLYPNLGVVSVEAYRSFVIADVPGLIEGAADGAGLGTQFLRHLQRTRLLLHLVDMAPMDGGVDGVSPADQVRTLERELERHDPQLLKKPRWLVLNKADLMFEDEARAAAETIVAELGWTAPWYLVSALGRDGTFPIMKDVMAFFDRQREDELEARNAG</sequence>